<keyword id="KW-0131">Cell cycle</keyword>
<keyword id="KW-0132">Cell division</keyword>
<keyword id="KW-1003">Cell membrane</keyword>
<keyword id="KW-0133">Cell shape</keyword>
<keyword id="KW-0961">Cell wall biogenesis/degradation</keyword>
<keyword id="KW-0328">Glycosyltransferase</keyword>
<keyword id="KW-0472">Membrane</keyword>
<keyword id="KW-0573">Peptidoglycan synthesis</keyword>
<keyword id="KW-1185">Reference proteome</keyword>
<keyword id="KW-0808">Transferase</keyword>
<evidence type="ECO:0000255" key="1">
    <source>
        <dbReference type="HAMAP-Rule" id="MF_00033"/>
    </source>
</evidence>
<reference key="1">
    <citation type="journal article" date="2006" name="Proc. Natl. Acad. Sci. U.S.A.">
        <title>Comparative genomics of the lactic acid bacteria.</title>
        <authorList>
            <person name="Makarova K.S."/>
            <person name="Slesarev A."/>
            <person name="Wolf Y.I."/>
            <person name="Sorokin A."/>
            <person name="Mirkin B."/>
            <person name="Koonin E.V."/>
            <person name="Pavlov A."/>
            <person name="Pavlova N."/>
            <person name="Karamychev V."/>
            <person name="Polouchine N."/>
            <person name="Shakhova V."/>
            <person name="Grigoriev I."/>
            <person name="Lou Y."/>
            <person name="Rohksar D."/>
            <person name="Lucas S."/>
            <person name="Huang K."/>
            <person name="Goodstein D.M."/>
            <person name="Hawkins T."/>
            <person name="Plengvidhya V."/>
            <person name="Welker D."/>
            <person name="Hughes J."/>
            <person name="Goh Y."/>
            <person name="Benson A."/>
            <person name="Baldwin K."/>
            <person name="Lee J.-H."/>
            <person name="Diaz-Muniz I."/>
            <person name="Dosti B."/>
            <person name="Smeianov V."/>
            <person name="Wechter W."/>
            <person name="Barabote R."/>
            <person name="Lorca G."/>
            <person name="Altermann E."/>
            <person name="Barrangou R."/>
            <person name="Ganesan B."/>
            <person name="Xie Y."/>
            <person name="Rawsthorne H."/>
            <person name="Tamir D."/>
            <person name="Parker C."/>
            <person name="Breidt F."/>
            <person name="Broadbent J.R."/>
            <person name="Hutkins R."/>
            <person name="O'Sullivan D."/>
            <person name="Steele J."/>
            <person name="Unlu G."/>
            <person name="Saier M.H. Jr."/>
            <person name="Klaenhammer T."/>
            <person name="Richardson P."/>
            <person name="Kozyavkin S."/>
            <person name="Weimer B.C."/>
            <person name="Mills D.A."/>
        </authorList>
    </citation>
    <scope>NUCLEOTIDE SEQUENCE [LARGE SCALE GENOMIC DNA]</scope>
    <source>
        <strain>ATCC 8293 / DSM 20343 / BCRC 11652 / CCM 1803 / JCM 6124 / NCDO 523 / NBRC 100496 / NCIMB 8023 / NCTC 12954 / NRRL B-1118 / 37Y</strain>
    </source>
</reference>
<protein>
    <recommendedName>
        <fullName evidence="1">UDP-N-acetylglucosamine--N-acetylmuramyl-(pentapeptide) pyrophosphoryl-undecaprenol N-acetylglucosamine transferase</fullName>
        <ecNumber evidence="1">2.4.1.227</ecNumber>
    </recommendedName>
    <alternativeName>
        <fullName evidence="1">Undecaprenyl-PP-MurNAc-pentapeptide-UDPGlcNAc GlcNAc transferase</fullName>
    </alternativeName>
</protein>
<dbReference type="EC" id="2.4.1.227" evidence="1"/>
<dbReference type="EMBL" id="CP000414">
    <property type="protein sequence ID" value="ABJ62587.1"/>
    <property type="molecule type" value="Genomic_DNA"/>
</dbReference>
<dbReference type="RefSeq" id="WP_010293865.1">
    <property type="nucleotide sequence ID" value="NC_008531.1"/>
</dbReference>
<dbReference type="SMR" id="Q03W35"/>
<dbReference type="CAZy" id="GT28">
    <property type="family name" value="Glycosyltransferase Family 28"/>
</dbReference>
<dbReference type="EnsemblBacteria" id="ABJ62587">
    <property type="protein sequence ID" value="ABJ62587"/>
    <property type="gene ID" value="LEUM_1495"/>
</dbReference>
<dbReference type="GeneID" id="29577289"/>
<dbReference type="KEGG" id="lme:LEUM_1495"/>
<dbReference type="eggNOG" id="COG0707">
    <property type="taxonomic scope" value="Bacteria"/>
</dbReference>
<dbReference type="HOGENOM" id="CLU_037404_0_1_9"/>
<dbReference type="UniPathway" id="UPA00219"/>
<dbReference type="Proteomes" id="UP000000362">
    <property type="component" value="Chromosome"/>
</dbReference>
<dbReference type="GO" id="GO:0005886">
    <property type="term" value="C:plasma membrane"/>
    <property type="evidence" value="ECO:0007669"/>
    <property type="project" value="UniProtKB-SubCell"/>
</dbReference>
<dbReference type="GO" id="GO:0050511">
    <property type="term" value="F:undecaprenyldiphospho-muramoylpentapeptide beta-N-acetylglucosaminyltransferase activity"/>
    <property type="evidence" value="ECO:0007669"/>
    <property type="project" value="UniProtKB-UniRule"/>
</dbReference>
<dbReference type="GO" id="GO:0005975">
    <property type="term" value="P:carbohydrate metabolic process"/>
    <property type="evidence" value="ECO:0007669"/>
    <property type="project" value="InterPro"/>
</dbReference>
<dbReference type="GO" id="GO:0051301">
    <property type="term" value="P:cell division"/>
    <property type="evidence" value="ECO:0007669"/>
    <property type="project" value="UniProtKB-KW"/>
</dbReference>
<dbReference type="GO" id="GO:0071555">
    <property type="term" value="P:cell wall organization"/>
    <property type="evidence" value="ECO:0007669"/>
    <property type="project" value="UniProtKB-KW"/>
</dbReference>
<dbReference type="GO" id="GO:0030259">
    <property type="term" value="P:lipid glycosylation"/>
    <property type="evidence" value="ECO:0007669"/>
    <property type="project" value="UniProtKB-UniRule"/>
</dbReference>
<dbReference type="GO" id="GO:0009252">
    <property type="term" value="P:peptidoglycan biosynthetic process"/>
    <property type="evidence" value="ECO:0007669"/>
    <property type="project" value="UniProtKB-UniRule"/>
</dbReference>
<dbReference type="GO" id="GO:0008360">
    <property type="term" value="P:regulation of cell shape"/>
    <property type="evidence" value="ECO:0007669"/>
    <property type="project" value="UniProtKB-KW"/>
</dbReference>
<dbReference type="CDD" id="cd03785">
    <property type="entry name" value="GT28_MurG"/>
    <property type="match status" value="1"/>
</dbReference>
<dbReference type="Gene3D" id="3.40.50.2000">
    <property type="entry name" value="Glycogen Phosphorylase B"/>
    <property type="match status" value="2"/>
</dbReference>
<dbReference type="HAMAP" id="MF_00033">
    <property type="entry name" value="MurG"/>
    <property type="match status" value="1"/>
</dbReference>
<dbReference type="InterPro" id="IPR006009">
    <property type="entry name" value="GlcNAc_MurG"/>
</dbReference>
<dbReference type="InterPro" id="IPR007235">
    <property type="entry name" value="Glyco_trans_28_C"/>
</dbReference>
<dbReference type="InterPro" id="IPR004276">
    <property type="entry name" value="GlycoTrans_28_N"/>
</dbReference>
<dbReference type="NCBIfam" id="TIGR01133">
    <property type="entry name" value="murG"/>
    <property type="match status" value="1"/>
</dbReference>
<dbReference type="PANTHER" id="PTHR21015:SF22">
    <property type="entry name" value="GLYCOSYLTRANSFERASE"/>
    <property type="match status" value="1"/>
</dbReference>
<dbReference type="PANTHER" id="PTHR21015">
    <property type="entry name" value="UDP-N-ACETYLGLUCOSAMINE--N-ACETYLMURAMYL-(PENTAPEPTIDE) PYROPHOSPHORYL-UNDECAPRENOL N-ACETYLGLUCOSAMINE TRANSFERASE 1"/>
    <property type="match status" value="1"/>
</dbReference>
<dbReference type="Pfam" id="PF04101">
    <property type="entry name" value="Glyco_tran_28_C"/>
    <property type="match status" value="1"/>
</dbReference>
<dbReference type="Pfam" id="PF03033">
    <property type="entry name" value="Glyco_transf_28"/>
    <property type="match status" value="1"/>
</dbReference>
<dbReference type="SUPFAM" id="SSF53756">
    <property type="entry name" value="UDP-Glycosyltransferase/glycogen phosphorylase"/>
    <property type="match status" value="1"/>
</dbReference>
<name>MURG_LEUMM</name>
<organism>
    <name type="scientific">Leuconostoc mesenteroides subsp. mesenteroides (strain ATCC 8293 / DSM 20343 / BCRC 11652 / CCM 1803 / JCM 6124 / NCDO 523 / NBRC 100496 / NCIMB 8023 / NCTC 12954 / NRRL B-1118 / 37Y)</name>
    <dbReference type="NCBI Taxonomy" id="203120"/>
    <lineage>
        <taxon>Bacteria</taxon>
        <taxon>Bacillati</taxon>
        <taxon>Bacillota</taxon>
        <taxon>Bacilli</taxon>
        <taxon>Lactobacillales</taxon>
        <taxon>Lactobacillaceae</taxon>
        <taxon>Leuconostoc</taxon>
    </lineage>
</organism>
<accession>Q03W35</accession>
<proteinExistence type="inferred from homology"/>
<gene>
    <name evidence="1" type="primary">murG</name>
    <name type="ordered locus">LEUM_1495</name>
</gene>
<feature type="chain" id="PRO_1000002666" description="UDP-N-acetylglucosamine--N-acetylmuramyl-(pentapeptide) pyrophosphoryl-undecaprenol N-acetylglucosamine transferase">
    <location>
        <begin position="1"/>
        <end position="363"/>
    </location>
</feature>
<feature type="binding site" evidence="1">
    <location>
        <begin position="10"/>
        <end position="12"/>
    </location>
    <ligand>
        <name>UDP-N-acetyl-alpha-D-glucosamine</name>
        <dbReference type="ChEBI" id="CHEBI:57705"/>
    </ligand>
</feature>
<feature type="binding site" evidence="1">
    <location>
        <position position="124"/>
    </location>
    <ligand>
        <name>UDP-N-acetyl-alpha-D-glucosamine</name>
        <dbReference type="ChEBI" id="CHEBI:57705"/>
    </ligand>
</feature>
<feature type="binding site" evidence="1">
    <location>
        <position position="195"/>
    </location>
    <ligand>
        <name>UDP-N-acetyl-alpha-D-glucosamine</name>
        <dbReference type="ChEBI" id="CHEBI:57705"/>
    </ligand>
</feature>
<feature type="binding site" evidence="1">
    <location>
        <position position="249"/>
    </location>
    <ligand>
        <name>UDP-N-acetyl-alpha-D-glucosamine</name>
        <dbReference type="ChEBI" id="CHEBI:57705"/>
    </ligand>
</feature>
<feature type="binding site" evidence="1">
    <location>
        <position position="294"/>
    </location>
    <ligand>
        <name>UDP-N-acetyl-alpha-D-glucosamine</name>
        <dbReference type="ChEBI" id="CHEBI:57705"/>
    </ligand>
</feature>
<comment type="function">
    <text evidence="1">Cell wall formation. Catalyzes the transfer of a GlcNAc subunit on undecaprenyl-pyrophosphoryl-MurNAc-pentapeptide (lipid intermediate I) to form undecaprenyl-pyrophosphoryl-MurNAc-(pentapeptide)GlcNAc (lipid intermediate II).</text>
</comment>
<comment type="catalytic activity">
    <reaction evidence="1">
        <text>Mur2Ac(oyl-L-Ala-gamma-D-Glu-L-Lys-D-Ala-D-Ala)-di-trans,octa-cis-undecaprenyl diphosphate + UDP-N-acetyl-alpha-D-glucosamine = beta-D-GlcNAc-(1-&gt;4)-Mur2Ac(oyl-L-Ala-gamma-D-Glu-L-Lys-D-Ala-D-Ala)-di-trans,octa-cis-undecaprenyl diphosphate + UDP + H(+)</text>
        <dbReference type="Rhea" id="RHEA:23192"/>
        <dbReference type="ChEBI" id="CHEBI:15378"/>
        <dbReference type="ChEBI" id="CHEBI:57705"/>
        <dbReference type="ChEBI" id="CHEBI:58223"/>
        <dbReference type="ChEBI" id="CHEBI:60032"/>
        <dbReference type="ChEBI" id="CHEBI:60033"/>
        <dbReference type="EC" id="2.4.1.227"/>
    </reaction>
</comment>
<comment type="pathway">
    <text evidence="1">Cell wall biogenesis; peptidoglycan biosynthesis.</text>
</comment>
<comment type="subcellular location">
    <subcellularLocation>
        <location evidence="1">Cell membrane</location>
        <topology evidence="1">Peripheral membrane protein</topology>
        <orientation evidence="1">Cytoplasmic side</orientation>
    </subcellularLocation>
</comment>
<comment type="similarity">
    <text evidence="1">Belongs to the glycosyltransferase 28 family. MurG subfamily.</text>
</comment>
<sequence>MKIILSGGGTGGHIYPALALAEVIRKHEPDTEFLYVGSERGVESNIVPATGMPFEKLTVQGFKRSFSLENIKTVSLFLKAVKEAKKIIKDFDPDVVVGTGGYVSGAVVYAAQRLHIPTVIHEQNSVAGVTNKFLSRGATKIGVAFDAALSQFPKDKVFVVGNPRAQQVASIKSNFSWQQIGLSDEKPSLLIFGGSQGAPPINLAVIDAMQEFNKRNYQVVIVTGPKRYENVLDRLTTQPADNVRILPYIENMPEVLAKTSAIVSRAGATSIAEITALGIPSILVPSPYVTGDHQTKNAQSLVDAGAALMITEPALSGKALLLAADSLLLNESVSKTMTEQAKNVGIRDAGDRLYALILDAIGE</sequence>